<keyword id="KW-0878">Amphibian defense peptide</keyword>
<keyword id="KW-1222">Bradykinin receptor impairing toxin</keyword>
<keyword id="KW-0903">Direct protein sequencing</keyword>
<keyword id="KW-1213">G-protein coupled receptor impairing toxin</keyword>
<keyword id="KW-0379">Hydroxylation</keyword>
<keyword id="KW-0964">Secreted</keyword>
<keyword id="KW-0800">Toxin</keyword>
<dbReference type="GO" id="GO:0005576">
    <property type="term" value="C:extracellular region"/>
    <property type="evidence" value="ECO:0007669"/>
    <property type="project" value="UniProtKB-SubCell"/>
</dbReference>
<dbReference type="GO" id="GO:0090729">
    <property type="term" value="F:toxin activity"/>
    <property type="evidence" value="ECO:0007669"/>
    <property type="project" value="UniProtKB-KW"/>
</dbReference>
<dbReference type="GO" id="GO:0006952">
    <property type="term" value="P:defense response"/>
    <property type="evidence" value="ECO:0007669"/>
    <property type="project" value="UniProtKB-KW"/>
</dbReference>
<proteinExistence type="evidence at protein level"/>
<protein>
    <recommendedName>
        <fullName>[Thr6]-bradykinin</fullName>
    </recommendedName>
</protein>
<comment type="function">
    <text evidence="1">[Thr6]-bradykinin: inhibits ACE with a Ki of 1.6 uM, and targets B2 bradykinin receptor (BDKRB2). Provokes contraction of smooth muscle preparation (ileum). In vivo, induces an early hyperalgesic effects in living rats after intraplantar injection (By similarity).</text>
</comment>
<comment type="subcellular location">
    <subcellularLocation>
        <location>Secreted</location>
    </subcellularLocation>
</comment>
<comment type="tissue specificity">
    <text evidence="2">Expressed by the skin glands.</text>
</comment>
<comment type="mass spectrometry"/>
<comment type="mass spectrometry">
    <text>Hydroxylated.</text>
</comment>
<comment type="similarity">
    <text evidence="3">Belongs to the bradykinin-related peptide family.</text>
</comment>
<sequence>RPPGFTPFR</sequence>
<accession>P84896</accession>
<feature type="peptide" id="PRO_0000248466" description="[Thr6]-bradykinin" evidence="2">
    <location>
        <begin position="1"/>
        <end position="9"/>
    </location>
</feature>
<feature type="modified residue" description="4-hydroxyproline; partial" evidence="2">
    <location>
        <position position="3"/>
    </location>
</feature>
<evidence type="ECO:0000250" key="1"/>
<evidence type="ECO:0000269" key="2">
    <source>
    </source>
</evidence>
<evidence type="ECO:0000305" key="3"/>
<reference evidence="3" key="1">
    <citation type="journal article" date="2006" name="Peptides">
        <title>Bradykinin-related peptides from Phyllomedusa hypochondrialis.</title>
        <authorList>
            <person name="Brand G.D."/>
            <person name="Krause F.C."/>
            <person name="Silva L.P."/>
            <person name="Leite J.R.S.A."/>
            <person name="Melo J.A.T."/>
            <person name="Prates M.V."/>
            <person name="Pesquero J.B."/>
            <person name="Santos E.L."/>
            <person name="Nakaie C.R."/>
            <person name="Costa-Neto C.M."/>
            <person name="Bloch C. Jr."/>
        </authorList>
    </citation>
    <scope>PROTEIN SEQUENCE</scope>
    <scope>MASS SPECTROMETRY</scope>
    <scope>HYDROXYLATION AT PRO-3</scope>
    <source>
        <tissue evidence="2">Skin secretion</tissue>
    </source>
</reference>
<organism>
    <name type="scientific">Pithecopus hypochondrialis</name>
    <name type="common">Orange-legged leaf frog</name>
    <name type="synonym">Phyllomedusa hypochondrialis</name>
    <dbReference type="NCBI Taxonomy" id="317381"/>
    <lineage>
        <taxon>Eukaryota</taxon>
        <taxon>Metazoa</taxon>
        <taxon>Chordata</taxon>
        <taxon>Craniata</taxon>
        <taxon>Vertebrata</taxon>
        <taxon>Euteleostomi</taxon>
        <taxon>Amphibia</taxon>
        <taxon>Batrachia</taxon>
        <taxon>Anura</taxon>
        <taxon>Neobatrachia</taxon>
        <taxon>Hyloidea</taxon>
        <taxon>Hylidae</taxon>
        <taxon>Phyllomedusinae</taxon>
        <taxon>Pithecopus</taxon>
    </lineage>
</organism>
<name>BRK5_PITHY</name>